<evidence type="ECO:0000250" key="1">
    <source>
        <dbReference type="UniProtKB" id="P02086"/>
    </source>
</evidence>
<evidence type="ECO:0000250" key="2">
    <source>
        <dbReference type="UniProtKB" id="P68871"/>
    </source>
</evidence>
<evidence type="ECO:0000255" key="3">
    <source>
        <dbReference type="PROSITE-ProRule" id="PRU00238"/>
    </source>
</evidence>
<accession>P07415</accession>
<comment type="function">
    <text>Involved in oxygen transport from the lung to the various peripheral tissues.</text>
</comment>
<comment type="subunit">
    <text>Heterotetramer of two alpha chains and two beta chains.</text>
</comment>
<comment type="tissue specificity">
    <text>Red blood cells.</text>
</comment>
<comment type="similarity">
    <text evidence="3">Belongs to the globin family.</text>
</comment>
<feature type="chain" id="PRO_0000053140" description="Hemoglobin subunit beta">
    <location>
        <begin position="1"/>
        <end position="146"/>
    </location>
</feature>
<feature type="domain" description="Globin" evidence="3">
    <location>
        <begin position="2"/>
        <end position="146"/>
    </location>
</feature>
<feature type="binding site" description="distal binding residue">
    <location>
        <position position="63"/>
    </location>
    <ligand>
        <name>heme b</name>
        <dbReference type="ChEBI" id="CHEBI:60344"/>
    </ligand>
    <ligandPart>
        <name>Fe</name>
        <dbReference type="ChEBI" id="CHEBI:18248"/>
    </ligandPart>
</feature>
<feature type="binding site" description="proximal binding residue">
    <location>
        <position position="92"/>
    </location>
    <ligand>
        <name>heme b</name>
        <dbReference type="ChEBI" id="CHEBI:60344"/>
    </ligand>
    <ligandPart>
        <name>Fe</name>
        <dbReference type="ChEBI" id="CHEBI:18248"/>
    </ligandPart>
</feature>
<feature type="modified residue" description="N-acetylvaline" evidence="1">
    <location>
        <position position="1"/>
    </location>
</feature>
<feature type="modified residue" description="N6-acetyllysine" evidence="2">
    <location>
        <position position="59"/>
    </location>
</feature>
<feature type="modified residue" description="N6-acetyllysine" evidence="2">
    <location>
        <position position="82"/>
    </location>
</feature>
<feature type="modified residue" description="S-nitrosocysteine" evidence="2">
    <location>
        <position position="93"/>
    </location>
</feature>
<feature type="modified residue" description="N6-acetyllysine" evidence="2">
    <location>
        <position position="144"/>
    </location>
</feature>
<protein>
    <recommendedName>
        <fullName>Hemoglobin subunit beta</fullName>
    </recommendedName>
    <alternativeName>
        <fullName>Beta-globin</fullName>
    </alternativeName>
    <alternativeName>
        <fullName>Hemoglobin beta chain</fullName>
    </alternativeName>
</protein>
<sequence length="146" mass="16180">VHLTPEEKALVIGLWAKVNVKEYGGEALGRLLVVYPWTQRFFEHFGDLSSASAIMNNPKVKAHGEKVFTSFGDGLKHLEDLKGAFAELSELHCDKLHVDPENFRLLGNVLVCVLARHFGKEFSPEAQAAYQKVVAGVANALAHKYH</sequence>
<organism>
    <name type="scientific">Trichechus inunguis</name>
    <name type="common">Amazon manatee</name>
    <name type="synonym">Brazilian manatee</name>
    <dbReference type="NCBI Taxonomy" id="9777"/>
    <lineage>
        <taxon>Eukaryota</taxon>
        <taxon>Metazoa</taxon>
        <taxon>Chordata</taxon>
        <taxon>Craniata</taxon>
        <taxon>Vertebrata</taxon>
        <taxon>Euteleostomi</taxon>
        <taxon>Mammalia</taxon>
        <taxon>Eutheria</taxon>
        <taxon>Afrotheria</taxon>
        <taxon>Sirenia</taxon>
        <taxon>Trichechidae</taxon>
        <taxon>Trichechus</taxon>
    </lineage>
</organism>
<name>HBB_TRIIN</name>
<keyword id="KW-0007">Acetylation</keyword>
<keyword id="KW-0903">Direct protein sequencing</keyword>
<keyword id="KW-0349">Heme</keyword>
<keyword id="KW-0408">Iron</keyword>
<keyword id="KW-0479">Metal-binding</keyword>
<keyword id="KW-0561">Oxygen transport</keyword>
<keyword id="KW-0702">S-nitrosylation</keyword>
<keyword id="KW-0813">Transport</keyword>
<reference key="1">
    <citation type="journal article" date="1988" name="Biol. Chem. Hoppe-Seyler">
        <title>The primary structure of the hemoglobin of the Brazilian manatee (Trichechus inunguis, Sirenia).</title>
        <authorList>
            <person name="Kleinschmidt T."/>
            <person name="Braunitzer G."/>
            <person name="Best R."/>
        </authorList>
    </citation>
    <scope>PROTEIN SEQUENCE</scope>
</reference>
<reference key="2">
    <citation type="journal article" date="1986" name="Mol. Biol. Evol.">
        <title>Paenungulata: a comparison of the hemoglobin sequences from elephant, hyrax, and manatee.</title>
        <authorList>
            <person name="Kleinschmidt T."/>
            <person name="Czelusniak J."/>
            <person name="Goodman M."/>
            <person name="Braunitzer G."/>
        </authorList>
    </citation>
    <scope>PROTEIN SEQUENCE</scope>
</reference>
<gene>
    <name type="primary">HBB</name>
</gene>
<dbReference type="PIR" id="S00821">
    <property type="entry name" value="HBEMA"/>
</dbReference>
<dbReference type="SMR" id="P07415"/>
<dbReference type="GO" id="GO:0072562">
    <property type="term" value="C:blood microparticle"/>
    <property type="evidence" value="ECO:0007669"/>
    <property type="project" value="TreeGrafter"/>
</dbReference>
<dbReference type="GO" id="GO:0031838">
    <property type="term" value="C:haptoglobin-hemoglobin complex"/>
    <property type="evidence" value="ECO:0007669"/>
    <property type="project" value="TreeGrafter"/>
</dbReference>
<dbReference type="GO" id="GO:0005833">
    <property type="term" value="C:hemoglobin complex"/>
    <property type="evidence" value="ECO:0007669"/>
    <property type="project" value="InterPro"/>
</dbReference>
<dbReference type="GO" id="GO:0031720">
    <property type="term" value="F:haptoglobin binding"/>
    <property type="evidence" value="ECO:0007669"/>
    <property type="project" value="TreeGrafter"/>
</dbReference>
<dbReference type="GO" id="GO:0020037">
    <property type="term" value="F:heme binding"/>
    <property type="evidence" value="ECO:0007669"/>
    <property type="project" value="InterPro"/>
</dbReference>
<dbReference type="GO" id="GO:0031721">
    <property type="term" value="F:hemoglobin alpha binding"/>
    <property type="evidence" value="ECO:0007669"/>
    <property type="project" value="TreeGrafter"/>
</dbReference>
<dbReference type="GO" id="GO:0046872">
    <property type="term" value="F:metal ion binding"/>
    <property type="evidence" value="ECO:0007669"/>
    <property type="project" value="UniProtKB-KW"/>
</dbReference>
<dbReference type="GO" id="GO:0043177">
    <property type="term" value="F:organic acid binding"/>
    <property type="evidence" value="ECO:0007669"/>
    <property type="project" value="TreeGrafter"/>
</dbReference>
<dbReference type="GO" id="GO:0019825">
    <property type="term" value="F:oxygen binding"/>
    <property type="evidence" value="ECO:0007669"/>
    <property type="project" value="InterPro"/>
</dbReference>
<dbReference type="GO" id="GO:0005344">
    <property type="term" value="F:oxygen carrier activity"/>
    <property type="evidence" value="ECO:0007669"/>
    <property type="project" value="UniProtKB-KW"/>
</dbReference>
<dbReference type="GO" id="GO:0004601">
    <property type="term" value="F:peroxidase activity"/>
    <property type="evidence" value="ECO:0007669"/>
    <property type="project" value="TreeGrafter"/>
</dbReference>
<dbReference type="GO" id="GO:0042744">
    <property type="term" value="P:hydrogen peroxide catabolic process"/>
    <property type="evidence" value="ECO:0007669"/>
    <property type="project" value="TreeGrafter"/>
</dbReference>
<dbReference type="CDD" id="cd08925">
    <property type="entry name" value="Hb-beta-like"/>
    <property type="match status" value="1"/>
</dbReference>
<dbReference type="FunFam" id="1.10.490.10:FF:000001">
    <property type="entry name" value="Hemoglobin subunit beta"/>
    <property type="match status" value="1"/>
</dbReference>
<dbReference type="Gene3D" id="1.10.490.10">
    <property type="entry name" value="Globins"/>
    <property type="match status" value="1"/>
</dbReference>
<dbReference type="InterPro" id="IPR000971">
    <property type="entry name" value="Globin"/>
</dbReference>
<dbReference type="InterPro" id="IPR009050">
    <property type="entry name" value="Globin-like_sf"/>
</dbReference>
<dbReference type="InterPro" id="IPR012292">
    <property type="entry name" value="Globin/Proto"/>
</dbReference>
<dbReference type="InterPro" id="IPR002337">
    <property type="entry name" value="Hemoglobin_b"/>
</dbReference>
<dbReference type="InterPro" id="IPR050056">
    <property type="entry name" value="Hemoglobin_oxygen_transport"/>
</dbReference>
<dbReference type="PANTHER" id="PTHR11442">
    <property type="entry name" value="HEMOGLOBIN FAMILY MEMBER"/>
    <property type="match status" value="1"/>
</dbReference>
<dbReference type="PANTHER" id="PTHR11442:SF42">
    <property type="entry name" value="HEMOGLOBIN SUBUNIT BETA"/>
    <property type="match status" value="1"/>
</dbReference>
<dbReference type="Pfam" id="PF00042">
    <property type="entry name" value="Globin"/>
    <property type="match status" value="1"/>
</dbReference>
<dbReference type="PRINTS" id="PR00814">
    <property type="entry name" value="BETAHAEM"/>
</dbReference>
<dbReference type="SUPFAM" id="SSF46458">
    <property type="entry name" value="Globin-like"/>
    <property type="match status" value="1"/>
</dbReference>
<dbReference type="PROSITE" id="PS01033">
    <property type="entry name" value="GLOBIN"/>
    <property type="match status" value="1"/>
</dbReference>
<proteinExistence type="evidence at protein level"/>